<protein>
    <recommendedName>
        <fullName>Protein MEMO1</fullName>
    </recommendedName>
    <alternativeName>
        <fullName>Mediator of ErbB2-driven cell motility 1</fullName>
        <shortName>Memo-1</shortName>
    </alternativeName>
</protein>
<name>MEMO1_MOUSE</name>
<sequence>MSNRVVCREASHAGSWYTASGPQLNAQLEGWLSQVQSTKRPARAIIAPHAGYTYCGSCAAHAYKQVDPSVTRRIFILGPSHHVPLSRCALSSVDIYRTPLYDLRIDQKIYGELWKTGMFERMSLQTDEDEHSIEMHLPYTAKAMESHKDEFTIIPVLVGALSESKEQEFGKLFSKYLADPSNLFVVSSDFCHWGQRFRYSYYDESQGEIYRSIEHLDKMGMSIIEQLDPVSFSNYLKKYHNTICGRHPIGVLLNAITELQKNGMNMSFSFLNYAQSSQCRSWQDSSVSYAAGALTVH</sequence>
<proteinExistence type="evidence at protein level"/>
<organism>
    <name type="scientific">Mus musculus</name>
    <name type="common">Mouse</name>
    <dbReference type="NCBI Taxonomy" id="10090"/>
    <lineage>
        <taxon>Eukaryota</taxon>
        <taxon>Metazoa</taxon>
        <taxon>Chordata</taxon>
        <taxon>Craniata</taxon>
        <taxon>Vertebrata</taxon>
        <taxon>Euteleostomi</taxon>
        <taxon>Mammalia</taxon>
        <taxon>Eutheria</taxon>
        <taxon>Euarchontoglires</taxon>
        <taxon>Glires</taxon>
        <taxon>Rodentia</taxon>
        <taxon>Myomorpha</taxon>
        <taxon>Muroidea</taxon>
        <taxon>Muridae</taxon>
        <taxon>Murinae</taxon>
        <taxon>Mus</taxon>
        <taxon>Mus</taxon>
    </lineage>
</organism>
<accession>Q91VH6</accession>
<gene>
    <name type="primary">Memo1</name>
</gene>
<comment type="function">
    <text evidence="1">May control cell migration by relaying extracellular chemotactic signals to the microtubule cytoskeleton. Mediator of ERBB2 signaling. The MEMO1-RHOA-DIAPH1 signaling pathway plays an important role in ERBB2-dependent stabilization of microtubules at the cell cortex. It controls the localization of APC and CLASP2 to the cell membrane, via the regulation of GSK3B activity. In turn, membrane-bound APC allows the localization of the MACF1 to the cell membrane, which is required for microtubule capture and stabilization (By similarity).</text>
</comment>
<comment type="subunit">
    <text evidence="1">Interacts with ERBB2 phosphorylated on 'Tyr-1249'.</text>
</comment>
<comment type="similarity">
    <text evidence="2">Belongs to the MEMO1 family.</text>
</comment>
<dbReference type="EMBL" id="AF363447">
    <property type="protein sequence ID" value="AAL34463.1"/>
    <property type="molecule type" value="mRNA"/>
</dbReference>
<dbReference type="EMBL" id="BC013819">
    <property type="protein sequence ID" value="AAH13819.1"/>
    <property type="molecule type" value="mRNA"/>
</dbReference>
<dbReference type="CCDS" id="CCDS28969.1"/>
<dbReference type="RefSeq" id="NP_598532.1">
    <property type="nucleotide sequence ID" value="NM_133771.2"/>
</dbReference>
<dbReference type="RefSeq" id="XP_006525172.1">
    <property type="nucleotide sequence ID" value="XM_006525109.5"/>
</dbReference>
<dbReference type="SMR" id="Q91VH6"/>
<dbReference type="BioGRID" id="218379">
    <property type="interactions" value="5"/>
</dbReference>
<dbReference type="FunCoup" id="Q91VH6">
    <property type="interactions" value="2464"/>
</dbReference>
<dbReference type="STRING" id="10090.ENSMUSP00000156607"/>
<dbReference type="iPTMnet" id="Q91VH6"/>
<dbReference type="PhosphoSitePlus" id="Q91VH6"/>
<dbReference type="jPOST" id="Q91VH6"/>
<dbReference type="PaxDb" id="10090-ENSMUSP00000077553"/>
<dbReference type="PeptideAtlas" id="Q91VH6"/>
<dbReference type="ProteomicsDB" id="295883"/>
<dbReference type="Pumba" id="Q91VH6"/>
<dbReference type="Antibodypedia" id="47374">
    <property type="antibodies" value="161 antibodies from 26 providers"/>
</dbReference>
<dbReference type="Ensembl" id="ENSMUST00000233514.3">
    <property type="protein sequence ID" value="ENSMUSP00000156607.2"/>
    <property type="gene ID" value="ENSMUSG00000058704.10"/>
</dbReference>
<dbReference type="GeneID" id="76890"/>
<dbReference type="KEGG" id="mmu:76890"/>
<dbReference type="UCSC" id="uc012axb.1">
    <property type="organism name" value="mouse"/>
</dbReference>
<dbReference type="AGR" id="MGI:1924140"/>
<dbReference type="CTD" id="51072"/>
<dbReference type="MGI" id="MGI:1924140">
    <property type="gene designation" value="Memo1"/>
</dbReference>
<dbReference type="VEuPathDB" id="HostDB:ENSMUSG00000058704"/>
<dbReference type="eggNOG" id="KOG3086">
    <property type="taxonomic scope" value="Eukaryota"/>
</dbReference>
<dbReference type="GeneTree" id="ENSGT00390000006408"/>
<dbReference type="HOGENOM" id="CLU_038085_0_1_1"/>
<dbReference type="InParanoid" id="Q91VH6"/>
<dbReference type="OMA" id="EQEAQYG"/>
<dbReference type="OrthoDB" id="417112at2759"/>
<dbReference type="PhylomeDB" id="Q91VH6"/>
<dbReference type="TreeFam" id="TF300014"/>
<dbReference type="Reactome" id="R-MMU-6785631">
    <property type="pathway name" value="ERBB2 Regulates Cell Motility"/>
</dbReference>
<dbReference type="BioGRID-ORCS" id="76890">
    <property type="hits" value="7 hits in 76 CRISPR screens"/>
</dbReference>
<dbReference type="ChiTaRS" id="Memo1">
    <property type="organism name" value="mouse"/>
</dbReference>
<dbReference type="PRO" id="PR:Q91VH6"/>
<dbReference type="Proteomes" id="UP000000589">
    <property type="component" value="Chromosome 17"/>
</dbReference>
<dbReference type="RNAct" id="Q91VH6">
    <property type="molecule type" value="protein"/>
</dbReference>
<dbReference type="Bgee" id="ENSMUSG00000058704">
    <property type="expression patterns" value="Expressed in spermatocyte and 276 other cell types or tissues"/>
</dbReference>
<dbReference type="ExpressionAtlas" id="Q91VH6">
    <property type="expression patterns" value="baseline and differential"/>
</dbReference>
<dbReference type="GO" id="GO:0042277">
    <property type="term" value="F:peptide binding"/>
    <property type="evidence" value="ECO:0000266"/>
    <property type="project" value="MGI"/>
</dbReference>
<dbReference type="GO" id="GO:0032886">
    <property type="term" value="P:regulation of microtubule-based process"/>
    <property type="evidence" value="ECO:0000250"/>
    <property type="project" value="UniProtKB"/>
</dbReference>
<dbReference type="CDD" id="cd07361">
    <property type="entry name" value="MEMO_like"/>
    <property type="match status" value="1"/>
</dbReference>
<dbReference type="FunFam" id="3.40.830.10:FF:000002">
    <property type="entry name" value="MEMO1 isoform 1"/>
    <property type="match status" value="1"/>
</dbReference>
<dbReference type="Gene3D" id="3.40.830.10">
    <property type="entry name" value="LigB-like"/>
    <property type="match status" value="1"/>
</dbReference>
<dbReference type="HAMAP" id="MF_00055">
    <property type="entry name" value="MEMO1"/>
    <property type="match status" value="1"/>
</dbReference>
<dbReference type="InterPro" id="IPR002737">
    <property type="entry name" value="MEMO1_fam"/>
</dbReference>
<dbReference type="NCBIfam" id="TIGR04336">
    <property type="entry name" value="AmmeMemoSam_B"/>
    <property type="match status" value="1"/>
</dbReference>
<dbReference type="PANTHER" id="PTHR11060">
    <property type="entry name" value="PROTEIN MEMO1"/>
    <property type="match status" value="1"/>
</dbReference>
<dbReference type="PANTHER" id="PTHR11060:SF0">
    <property type="entry name" value="PROTEIN MEMO1"/>
    <property type="match status" value="1"/>
</dbReference>
<dbReference type="Pfam" id="PF01875">
    <property type="entry name" value="Memo"/>
    <property type="match status" value="1"/>
</dbReference>
<keyword id="KW-0597">Phosphoprotein</keyword>
<keyword id="KW-1185">Reference proteome</keyword>
<feature type="chain" id="PRO_0000134395" description="Protein MEMO1">
    <location>
        <begin position="1"/>
        <end position="297"/>
    </location>
</feature>
<feature type="modified residue" description="Phosphotyrosine" evidence="3">
    <location>
        <position position="210"/>
    </location>
</feature>
<evidence type="ECO:0000250" key="1"/>
<evidence type="ECO:0000305" key="2"/>
<evidence type="ECO:0007744" key="3">
    <source>
    </source>
</evidence>
<reference key="1">
    <citation type="journal article" date="2001" name="Genomics">
        <title>From PREDs and open reading frames to cDNA isolation: revisiting the human chromosome 21 transcription map.</title>
        <authorList>
            <person name="Reymond A."/>
            <person name="Friedli M."/>
            <person name="Neergaard Henrichsen C."/>
            <person name="Chapot F."/>
            <person name="Deutsch S."/>
            <person name="Ucla C."/>
            <person name="Rossier C."/>
            <person name="Lyle R."/>
            <person name="Guipponi M."/>
            <person name="Antonarakis S.E."/>
        </authorList>
    </citation>
    <scope>NUCLEOTIDE SEQUENCE [MRNA]</scope>
</reference>
<reference key="2">
    <citation type="journal article" date="2004" name="Genome Res.">
        <title>The status, quality, and expansion of the NIH full-length cDNA project: the Mammalian Gene Collection (MGC).</title>
        <authorList>
            <consortium name="The MGC Project Team"/>
        </authorList>
    </citation>
    <scope>NUCLEOTIDE SEQUENCE [LARGE SCALE MRNA]</scope>
    <source>
        <strain>C57BL/6J</strain>
        <strain>FVB/N</strain>
        <tissue>Mammary tumor</tissue>
    </source>
</reference>
<reference key="3">
    <citation type="journal article" date="2007" name="J. Immunol.">
        <title>Quantitative time-resolved phosphoproteomic analysis of mast cell signaling.</title>
        <authorList>
            <person name="Cao L."/>
            <person name="Yu K."/>
            <person name="Banh C."/>
            <person name="Nguyen V."/>
            <person name="Ritz A."/>
            <person name="Raphael B.J."/>
            <person name="Kawakami Y."/>
            <person name="Kawakami T."/>
            <person name="Salomon A.R."/>
        </authorList>
    </citation>
    <scope>PHOSPHORYLATION [LARGE SCALE ANALYSIS] AT TYR-210</scope>
    <scope>IDENTIFICATION BY MASS SPECTROMETRY [LARGE SCALE ANALYSIS]</scope>
    <source>
        <tissue>Mast cell</tissue>
    </source>
</reference>
<reference key="4">
    <citation type="journal article" date="2010" name="Cell">
        <title>A tissue-specific atlas of mouse protein phosphorylation and expression.</title>
        <authorList>
            <person name="Huttlin E.L."/>
            <person name="Jedrychowski M.P."/>
            <person name="Elias J.E."/>
            <person name="Goswami T."/>
            <person name="Rad R."/>
            <person name="Beausoleil S.A."/>
            <person name="Villen J."/>
            <person name="Haas W."/>
            <person name="Sowa M.E."/>
            <person name="Gygi S.P."/>
        </authorList>
    </citation>
    <scope>IDENTIFICATION BY MASS SPECTROMETRY [LARGE SCALE ANALYSIS]</scope>
    <source>
        <tissue>Brain</tissue>
        <tissue>Brown adipose tissue</tissue>
        <tissue>Heart</tissue>
        <tissue>Kidney</tissue>
        <tissue>Liver</tissue>
        <tissue>Lung</tissue>
        <tissue>Pancreas</tissue>
        <tissue>Spleen</tissue>
        <tissue>Testis</tissue>
    </source>
</reference>